<accession>Q32A36</accession>
<feature type="chain" id="PRO_0000266948" description="Probable GTP-binding protein EngB">
    <location>
        <begin position="1"/>
        <end position="210"/>
    </location>
</feature>
<feature type="domain" description="EngB-type G" evidence="1">
    <location>
        <begin position="25"/>
        <end position="199"/>
    </location>
</feature>
<feature type="binding site" evidence="1">
    <location>
        <begin position="33"/>
        <end position="40"/>
    </location>
    <ligand>
        <name>GTP</name>
        <dbReference type="ChEBI" id="CHEBI:37565"/>
    </ligand>
</feature>
<feature type="binding site" evidence="1">
    <location>
        <position position="40"/>
    </location>
    <ligand>
        <name>Mg(2+)</name>
        <dbReference type="ChEBI" id="CHEBI:18420"/>
    </ligand>
</feature>
<feature type="binding site" evidence="1">
    <location>
        <begin position="60"/>
        <end position="64"/>
    </location>
    <ligand>
        <name>GTP</name>
        <dbReference type="ChEBI" id="CHEBI:37565"/>
    </ligand>
</feature>
<feature type="binding site" evidence="1">
    <location>
        <position position="62"/>
    </location>
    <ligand>
        <name>Mg(2+)</name>
        <dbReference type="ChEBI" id="CHEBI:18420"/>
    </ligand>
</feature>
<feature type="binding site" evidence="1">
    <location>
        <begin position="78"/>
        <end position="81"/>
    </location>
    <ligand>
        <name>GTP</name>
        <dbReference type="ChEBI" id="CHEBI:37565"/>
    </ligand>
</feature>
<feature type="binding site" evidence="1">
    <location>
        <begin position="145"/>
        <end position="148"/>
    </location>
    <ligand>
        <name>GTP</name>
        <dbReference type="ChEBI" id="CHEBI:37565"/>
    </ligand>
</feature>
<feature type="binding site" evidence="1">
    <location>
        <begin position="178"/>
        <end position="180"/>
    </location>
    <ligand>
        <name>GTP</name>
        <dbReference type="ChEBI" id="CHEBI:37565"/>
    </ligand>
</feature>
<sequence>MTNLNYQQTHFVMSAPDIRHLPSDTGIEVAFAGRSNAGKSSALNTLTNQKSLARTSKTPGRTQLINLFEVADGKRLVDLPGYGYAEVPEEMKRKWQRALGEYLEKRQSLQGLVVLMDIRHPLKDLDQQMIEWAVDSNIAVLVLLTKADKLASGARKAQLNMVREAVLAFNGDVQVETFSSLKKQGVDKLRQKLDTWFSEMQPVEETQDGE</sequence>
<proteinExistence type="inferred from homology"/>
<name>ENGB_SHIDS</name>
<reference key="1">
    <citation type="journal article" date="2005" name="Nucleic Acids Res.">
        <title>Genome dynamics and diversity of Shigella species, the etiologic agents of bacillary dysentery.</title>
        <authorList>
            <person name="Yang F."/>
            <person name="Yang J."/>
            <person name="Zhang X."/>
            <person name="Chen L."/>
            <person name="Jiang Y."/>
            <person name="Yan Y."/>
            <person name="Tang X."/>
            <person name="Wang J."/>
            <person name="Xiong Z."/>
            <person name="Dong J."/>
            <person name="Xue Y."/>
            <person name="Zhu Y."/>
            <person name="Xu X."/>
            <person name="Sun L."/>
            <person name="Chen S."/>
            <person name="Nie H."/>
            <person name="Peng J."/>
            <person name="Xu J."/>
            <person name="Wang Y."/>
            <person name="Yuan Z."/>
            <person name="Wen Y."/>
            <person name="Yao Z."/>
            <person name="Shen Y."/>
            <person name="Qiang B."/>
            <person name="Hou Y."/>
            <person name="Yu J."/>
            <person name="Jin Q."/>
        </authorList>
    </citation>
    <scope>NUCLEOTIDE SEQUENCE [LARGE SCALE GENOMIC DNA]</scope>
    <source>
        <strain>Sd197</strain>
    </source>
</reference>
<keyword id="KW-0131">Cell cycle</keyword>
<keyword id="KW-0132">Cell division</keyword>
<keyword id="KW-0342">GTP-binding</keyword>
<keyword id="KW-0460">Magnesium</keyword>
<keyword id="KW-0479">Metal-binding</keyword>
<keyword id="KW-0547">Nucleotide-binding</keyword>
<keyword id="KW-1185">Reference proteome</keyword>
<keyword id="KW-0717">Septation</keyword>
<comment type="function">
    <text evidence="1">Necessary for normal cell division and for the maintenance of normal septation.</text>
</comment>
<comment type="cofactor">
    <cofactor evidence="1">
        <name>Mg(2+)</name>
        <dbReference type="ChEBI" id="CHEBI:18420"/>
    </cofactor>
</comment>
<comment type="similarity">
    <text evidence="1">Belongs to the TRAFAC class TrmE-Era-EngA-EngB-Septin-like GTPase superfamily. EngB GTPase family.</text>
</comment>
<comment type="sequence caution" evidence="2">
    <conflict type="erroneous initiation">
        <sequence resource="EMBL-CDS" id="ABB63819"/>
    </conflict>
</comment>
<protein>
    <recommendedName>
        <fullName evidence="1">Probable GTP-binding protein EngB</fullName>
    </recommendedName>
</protein>
<dbReference type="EMBL" id="CP000034">
    <property type="protein sequence ID" value="ABB63819.1"/>
    <property type="status" value="ALT_INIT"/>
    <property type="molecule type" value="Genomic_DNA"/>
</dbReference>
<dbReference type="RefSeq" id="YP_405310.2">
    <property type="nucleotide sequence ID" value="NC_007606.1"/>
</dbReference>
<dbReference type="SMR" id="Q32A36"/>
<dbReference type="STRING" id="300267.SDY_3878"/>
<dbReference type="EnsemblBacteria" id="ABB63819">
    <property type="protein sequence ID" value="ABB63819"/>
    <property type="gene ID" value="SDY_3878"/>
</dbReference>
<dbReference type="KEGG" id="sdy:SDY_3878"/>
<dbReference type="PATRIC" id="fig|300267.13.peg.4588"/>
<dbReference type="HOGENOM" id="CLU_033732_1_0_6"/>
<dbReference type="Proteomes" id="UP000002716">
    <property type="component" value="Chromosome"/>
</dbReference>
<dbReference type="GO" id="GO:0005829">
    <property type="term" value="C:cytosol"/>
    <property type="evidence" value="ECO:0007669"/>
    <property type="project" value="TreeGrafter"/>
</dbReference>
<dbReference type="GO" id="GO:0005525">
    <property type="term" value="F:GTP binding"/>
    <property type="evidence" value="ECO:0007669"/>
    <property type="project" value="UniProtKB-UniRule"/>
</dbReference>
<dbReference type="GO" id="GO:0046872">
    <property type="term" value="F:metal ion binding"/>
    <property type="evidence" value="ECO:0007669"/>
    <property type="project" value="UniProtKB-KW"/>
</dbReference>
<dbReference type="GO" id="GO:0000917">
    <property type="term" value="P:division septum assembly"/>
    <property type="evidence" value="ECO:0007669"/>
    <property type="project" value="UniProtKB-KW"/>
</dbReference>
<dbReference type="CDD" id="cd01876">
    <property type="entry name" value="YihA_EngB"/>
    <property type="match status" value="1"/>
</dbReference>
<dbReference type="FunFam" id="3.40.50.300:FF:000098">
    <property type="entry name" value="Probable GTP-binding protein EngB"/>
    <property type="match status" value="1"/>
</dbReference>
<dbReference type="Gene3D" id="3.40.50.300">
    <property type="entry name" value="P-loop containing nucleotide triphosphate hydrolases"/>
    <property type="match status" value="1"/>
</dbReference>
<dbReference type="HAMAP" id="MF_00321">
    <property type="entry name" value="GTPase_EngB"/>
    <property type="match status" value="1"/>
</dbReference>
<dbReference type="InterPro" id="IPR030393">
    <property type="entry name" value="G_ENGB_dom"/>
</dbReference>
<dbReference type="InterPro" id="IPR006073">
    <property type="entry name" value="GTP-bd"/>
</dbReference>
<dbReference type="InterPro" id="IPR019987">
    <property type="entry name" value="GTP-bd_ribosome_bio_YsxC"/>
</dbReference>
<dbReference type="InterPro" id="IPR027417">
    <property type="entry name" value="P-loop_NTPase"/>
</dbReference>
<dbReference type="NCBIfam" id="TIGR03598">
    <property type="entry name" value="GTPase_YsxC"/>
    <property type="match status" value="1"/>
</dbReference>
<dbReference type="PANTHER" id="PTHR11649:SF13">
    <property type="entry name" value="ENGB-TYPE G DOMAIN-CONTAINING PROTEIN"/>
    <property type="match status" value="1"/>
</dbReference>
<dbReference type="PANTHER" id="PTHR11649">
    <property type="entry name" value="MSS1/TRME-RELATED GTP-BINDING PROTEIN"/>
    <property type="match status" value="1"/>
</dbReference>
<dbReference type="Pfam" id="PF01926">
    <property type="entry name" value="MMR_HSR1"/>
    <property type="match status" value="1"/>
</dbReference>
<dbReference type="SUPFAM" id="SSF52540">
    <property type="entry name" value="P-loop containing nucleoside triphosphate hydrolases"/>
    <property type="match status" value="1"/>
</dbReference>
<dbReference type="PROSITE" id="PS51706">
    <property type="entry name" value="G_ENGB"/>
    <property type="match status" value="1"/>
</dbReference>
<gene>
    <name evidence="1" type="primary">engB</name>
    <name type="ordered locus">SDY_3878</name>
</gene>
<organism>
    <name type="scientific">Shigella dysenteriae serotype 1 (strain Sd197)</name>
    <dbReference type="NCBI Taxonomy" id="300267"/>
    <lineage>
        <taxon>Bacteria</taxon>
        <taxon>Pseudomonadati</taxon>
        <taxon>Pseudomonadota</taxon>
        <taxon>Gammaproteobacteria</taxon>
        <taxon>Enterobacterales</taxon>
        <taxon>Enterobacteriaceae</taxon>
        <taxon>Shigella</taxon>
    </lineage>
</organism>
<evidence type="ECO:0000255" key="1">
    <source>
        <dbReference type="HAMAP-Rule" id="MF_00321"/>
    </source>
</evidence>
<evidence type="ECO:0000305" key="2"/>